<feature type="chain" id="PRO_0000109709" description="Glutamate 5-kinase">
    <location>
        <begin position="1"/>
        <end position="372"/>
    </location>
</feature>
<feature type="domain" description="PUA" evidence="1">
    <location>
        <begin position="280"/>
        <end position="358"/>
    </location>
</feature>
<feature type="binding site" evidence="1">
    <location>
        <position position="14"/>
    </location>
    <ligand>
        <name>ATP</name>
        <dbReference type="ChEBI" id="CHEBI:30616"/>
    </ligand>
</feature>
<feature type="binding site" evidence="1">
    <location>
        <position position="54"/>
    </location>
    <ligand>
        <name>substrate</name>
    </ligand>
</feature>
<feature type="binding site" evidence="1">
    <location>
        <position position="141"/>
    </location>
    <ligand>
        <name>substrate</name>
    </ligand>
</feature>
<feature type="binding site" evidence="1">
    <location>
        <position position="153"/>
    </location>
    <ligand>
        <name>substrate</name>
    </ligand>
</feature>
<feature type="binding site" evidence="1">
    <location>
        <begin position="173"/>
        <end position="174"/>
    </location>
    <ligand>
        <name>ATP</name>
        <dbReference type="ChEBI" id="CHEBI:30616"/>
    </ligand>
</feature>
<proteinExistence type="inferred from homology"/>
<sequence length="372" mass="39846">MRDKVTGARRWVVKIGSALLTADGRGLDRNAMAVWVEQMVALHCAGIELVLVSSGAVAAGMSRLGWVSRPSAMHELQAAASVGQMGLVQAWESSFALHGLQTAQVLLTHDDLSDRKRYLNARSTLRTLVELGVVPVINENDTVVTDEIRFGDNDTLAALVANLVEADLLVILTDRDGMFDADPRNNPDAQLIYEARADDPQLDAVAGGSAGALGRGGMQTKLRAARLAARSGGHTVIVGGRIERVLDRLRAGERLGTLLTPDRSRKAARKQWLAGHLQMRGTLVLDDGAVKAVSQDHKSLLPVGVKAVQGSFRRGEMVVCVDQGGREVARGLVNYSALEAQKILGQPTDAIEALLGYVDGPELVHRDNLVLV</sequence>
<organism>
    <name type="scientific">Pseudomonas aeruginosa (strain ATCC 15692 / DSM 22644 / CIP 104116 / JCM 14847 / LMG 12228 / 1C / PRS 101 / PAO1)</name>
    <dbReference type="NCBI Taxonomy" id="208964"/>
    <lineage>
        <taxon>Bacteria</taxon>
        <taxon>Pseudomonadati</taxon>
        <taxon>Pseudomonadota</taxon>
        <taxon>Gammaproteobacteria</taxon>
        <taxon>Pseudomonadales</taxon>
        <taxon>Pseudomonadaceae</taxon>
        <taxon>Pseudomonas</taxon>
    </lineage>
</organism>
<accession>Q9HVL9</accession>
<comment type="function">
    <text evidence="1">Catalyzes the transfer of a phosphate group to glutamate to form L-glutamate 5-phosphate.</text>
</comment>
<comment type="catalytic activity">
    <reaction evidence="1">
        <text>L-glutamate + ATP = L-glutamyl 5-phosphate + ADP</text>
        <dbReference type="Rhea" id="RHEA:14877"/>
        <dbReference type="ChEBI" id="CHEBI:29985"/>
        <dbReference type="ChEBI" id="CHEBI:30616"/>
        <dbReference type="ChEBI" id="CHEBI:58274"/>
        <dbReference type="ChEBI" id="CHEBI:456216"/>
        <dbReference type="EC" id="2.7.2.11"/>
    </reaction>
</comment>
<comment type="pathway">
    <text evidence="1">Amino-acid biosynthesis; L-proline biosynthesis; L-glutamate 5-semialdehyde from L-glutamate: step 1/2.</text>
</comment>
<comment type="subcellular location">
    <subcellularLocation>
        <location evidence="1">Cytoplasm</location>
    </subcellularLocation>
</comment>
<comment type="similarity">
    <text evidence="1">Belongs to the glutamate 5-kinase family.</text>
</comment>
<reference key="1">
    <citation type="journal article" date="2000" name="Nature">
        <title>Complete genome sequence of Pseudomonas aeruginosa PAO1, an opportunistic pathogen.</title>
        <authorList>
            <person name="Stover C.K."/>
            <person name="Pham X.-Q.T."/>
            <person name="Erwin A.L."/>
            <person name="Mizoguchi S.D."/>
            <person name="Warrener P."/>
            <person name="Hickey M.J."/>
            <person name="Brinkman F.S.L."/>
            <person name="Hufnagle W.O."/>
            <person name="Kowalik D.J."/>
            <person name="Lagrou M."/>
            <person name="Garber R.L."/>
            <person name="Goltry L."/>
            <person name="Tolentino E."/>
            <person name="Westbrock-Wadman S."/>
            <person name="Yuan Y."/>
            <person name="Brody L.L."/>
            <person name="Coulter S.N."/>
            <person name="Folger K.R."/>
            <person name="Kas A."/>
            <person name="Larbig K."/>
            <person name="Lim R.M."/>
            <person name="Smith K.A."/>
            <person name="Spencer D.H."/>
            <person name="Wong G.K.-S."/>
            <person name="Wu Z."/>
            <person name="Paulsen I.T."/>
            <person name="Reizer J."/>
            <person name="Saier M.H. Jr."/>
            <person name="Hancock R.E.W."/>
            <person name="Lory S."/>
            <person name="Olson M.V."/>
        </authorList>
    </citation>
    <scope>NUCLEOTIDE SEQUENCE [LARGE SCALE GENOMIC DNA]</scope>
    <source>
        <strain>ATCC 15692 / DSM 22644 / CIP 104116 / JCM 14847 / LMG 12228 / 1C / PRS 101 / PAO1</strain>
    </source>
</reference>
<dbReference type="EC" id="2.7.2.11" evidence="1"/>
<dbReference type="EMBL" id="AE004091">
    <property type="protein sequence ID" value="AAG07953.1"/>
    <property type="molecule type" value="Genomic_DNA"/>
</dbReference>
<dbReference type="PIR" id="G83074">
    <property type="entry name" value="G83074"/>
</dbReference>
<dbReference type="RefSeq" id="NP_253255.1">
    <property type="nucleotide sequence ID" value="NC_002516.2"/>
</dbReference>
<dbReference type="RefSeq" id="WP_003094756.1">
    <property type="nucleotide sequence ID" value="NZ_QZGE01000004.1"/>
</dbReference>
<dbReference type="SMR" id="Q9HVL9"/>
<dbReference type="FunCoup" id="Q9HVL9">
    <property type="interactions" value="501"/>
</dbReference>
<dbReference type="STRING" id="208964.PA4565"/>
<dbReference type="PaxDb" id="208964-PA4565"/>
<dbReference type="GeneID" id="880909"/>
<dbReference type="KEGG" id="pae:PA4565"/>
<dbReference type="PATRIC" id="fig|208964.12.peg.4777"/>
<dbReference type="PseudoCAP" id="PA4565"/>
<dbReference type="HOGENOM" id="CLU_025400_2_0_6"/>
<dbReference type="InParanoid" id="Q9HVL9"/>
<dbReference type="OrthoDB" id="9804434at2"/>
<dbReference type="PhylomeDB" id="Q9HVL9"/>
<dbReference type="BioCyc" id="PAER208964:G1FZ6-4658-MONOMER"/>
<dbReference type="UniPathway" id="UPA00098">
    <property type="reaction ID" value="UER00359"/>
</dbReference>
<dbReference type="Proteomes" id="UP000002438">
    <property type="component" value="Chromosome"/>
</dbReference>
<dbReference type="GO" id="GO:0005829">
    <property type="term" value="C:cytosol"/>
    <property type="evidence" value="ECO:0000318"/>
    <property type="project" value="GO_Central"/>
</dbReference>
<dbReference type="GO" id="GO:0005524">
    <property type="term" value="F:ATP binding"/>
    <property type="evidence" value="ECO:0007669"/>
    <property type="project" value="UniProtKB-KW"/>
</dbReference>
<dbReference type="GO" id="GO:0004349">
    <property type="term" value="F:glutamate 5-kinase activity"/>
    <property type="evidence" value="ECO:0000318"/>
    <property type="project" value="GO_Central"/>
</dbReference>
<dbReference type="GO" id="GO:0003723">
    <property type="term" value="F:RNA binding"/>
    <property type="evidence" value="ECO:0007669"/>
    <property type="project" value="InterPro"/>
</dbReference>
<dbReference type="GO" id="GO:0055129">
    <property type="term" value="P:L-proline biosynthetic process"/>
    <property type="evidence" value="ECO:0007669"/>
    <property type="project" value="UniProtKB-UniRule"/>
</dbReference>
<dbReference type="GO" id="GO:0006561">
    <property type="term" value="P:proline biosynthetic process"/>
    <property type="evidence" value="ECO:0000318"/>
    <property type="project" value="GO_Central"/>
</dbReference>
<dbReference type="CDD" id="cd04242">
    <property type="entry name" value="AAK_G5K_ProB"/>
    <property type="match status" value="1"/>
</dbReference>
<dbReference type="CDD" id="cd21157">
    <property type="entry name" value="PUA_G5K"/>
    <property type="match status" value="1"/>
</dbReference>
<dbReference type="FunFam" id="2.30.130.10:FF:000003">
    <property type="entry name" value="Glutamate 5-kinase"/>
    <property type="match status" value="1"/>
</dbReference>
<dbReference type="FunFam" id="3.40.1160.10:FF:000003">
    <property type="entry name" value="Glutamate 5-kinase"/>
    <property type="match status" value="1"/>
</dbReference>
<dbReference type="FunFam" id="3.40.1160.10:FF:000038">
    <property type="entry name" value="Glutamate 5-kinase"/>
    <property type="match status" value="1"/>
</dbReference>
<dbReference type="Gene3D" id="3.40.1160.10">
    <property type="entry name" value="Acetylglutamate kinase-like"/>
    <property type="match status" value="2"/>
</dbReference>
<dbReference type="Gene3D" id="2.30.130.10">
    <property type="entry name" value="PUA domain"/>
    <property type="match status" value="1"/>
</dbReference>
<dbReference type="HAMAP" id="MF_00456">
    <property type="entry name" value="ProB"/>
    <property type="match status" value="1"/>
</dbReference>
<dbReference type="InterPro" id="IPR036393">
    <property type="entry name" value="AceGlu_kinase-like_sf"/>
</dbReference>
<dbReference type="InterPro" id="IPR001048">
    <property type="entry name" value="Asp/Glu/Uridylate_kinase"/>
</dbReference>
<dbReference type="InterPro" id="IPR041739">
    <property type="entry name" value="G5K_ProB"/>
</dbReference>
<dbReference type="InterPro" id="IPR001057">
    <property type="entry name" value="Glu/AcGlu_kinase"/>
</dbReference>
<dbReference type="InterPro" id="IPR011529">
    <property type="entry name" value="Glu_5kinase"/>
</dbReference>
<dbReference type="InterPro" id="IPR005715">
    <property type="entry name" value="Glu_5kinase/COase_Synthase"/>
</dbReference>
<dbReference type="InterPro" id="IPR019797">
    <property type="entry name" value="Glutamate_5-kinase_CS"/>
</dbReference>
<dbReference type="InterPro" id="IPR002478">
    <property type="entry name" value="PUA"/>
</dbReference>
<dbReference type="InterPro" id="IPR015947">
    <property type="entry name" value="PUA-like_sf"/>
</dbReference>
<dbReference type="InterPro" id="IPR036974">
    <property type="entry name" value="PUA_sf"/>
</dbReference>
<dbReference type="NCBIfam" id="TIGR01027">
    <property type="entry name" value="proB"/>
    <property type="match status" value="1"/>
</dbReference>
<dbReference type="PANTHER" id="PTHR43654">
    <property type="entry name" value="GLUTAMATE 5-KINASE"/>
    <property type="match status" value="1"/>
</dbReference>
<dbReference type="PANTHER" id="PTHR43654:SF1">
    <property type="entry name" value="ISOPENTENYL PHOSPHATE KINASE"/>
    <property type="match status" value="1"/>
</dbReference>
<dbReference type="Pfam" id="PF00696">
    <property type="entry name" value="AA_kinase"/>
    <property type="match status" value="1"/>
</dbReference>
<dbReference type="Pfam" id="PF01472">
    <property type="entry name" value="PUA"/>
    <property type="match status" value="1"/>
</dbReference>
<dbReference type="PIRSF" id="PIRSF000729">
    <property type="entry name" value="GK"/>
    <property type="match status" value="1"/>
</dbReference>
<dbReference type="PRINTS" id="PR00474">
    <property type="entry name" value="GLU5KINASE"/>
</dbReference>
<dbReference type="SMART" id="SM00359">
    <property type="entry name" value="PUA"/>
    <property type="match status" value="1"/>
</dbReference>
<dbReference type="SUPFAM" id="SSF53633">
    <property type="entry name" value="Carbamate kinase-like"/>
    <property type="match status" value="1"/>
</dbReference>
<dbReference type="SUPFAM" id="SSF88697">
    <property type="entry name" value="PUA domain-like"/>
    <property type="match status" value="1"/>
</dbReference>
<dbReference type="PROSITE" id="PS00902">
    <property type="entry name" value="GLUTAMATE_5_KINASE"/>
    <property type="match status" value="1"/>
</dbReference>
<dbReference type="PROSITE" id="PS50890">
    <property type="entry name" value="PUA"/>
    <property type="match status" value="1"/>
</dbReference>
<protein>
    <recommendedName>
        <fullName evidence="1">Glutamate 5-kinase</fullName>
        <ecNumber evidence="1">2.7.2.11</ecNumber>
    </recommendedName>
    <alternativeName>
        <fullName evidence="1">Gamma-glutamyl kinase</fullName>
        <shortName evidence="1">GK</shortName>
    </alternativeName>
</protein>
<evidence type="ECO:0000255" key="1">
    <source>
        <dbReference type="HAMAP-Rule" id="MF_00456"/>
    </source>
</evidence>
<name>PROB_PSEAE</name>
<keyword id="KW-0028">Amino-acid biosynthesis</keyword>
<keyword id="KW-0067">ATP-binding</keyword>
<keyword id="KW-0963">Cytoplasm</keyword>
<keyword id="KW-0418">Kinase</keyword>
<keyword id="KW-0547">Nucleotide-binding</keyword>
<keyword id="KW-0641">Proline biosynthesis</keyword>
<keyword id="KW-1185">Reference proteome</keyword>
<keyword id="KW-0808">Transferase</keyword>
<gene>
    <name evidence="1" type="primary">proB</name>
    <name type="ordered locus">PA4565</name>
</gene>